<protein>
    <recommendedName>
        <fullName>Putative lipoprotein LprD</fullName>
    </recommendedName>
</protein>
<keyword id="KW-1003">Cell membrane</keyword>
<keyword id="KW-0449">Lipoprotein</keyword>
<keyword id="KW-0472">Membrane</keyword>
<keyword id="KW-0564">Palmitate</keyword>
<keyword id="KW-1185">Reference proteome</keyword>
<keyword id="KW-0732">Signal</keyword>
<keyword id="KW-0812">Transmembrane</keyword>
<keyword id="KW-1133">Transmembrane helix</keyword>
<proteinExistence type="inferred from homology"/>
<reference key="1">
    <citation type="submission" date="1994-09" db="EMBL/GenBank/DDBJ databases">
        <authorList>
            <person name="Smith D.R."/>
            <person name="Robison K."/>
        </authorList>
    </citation>
    <scope>NUCLEOTIDE SEQUENCE [GENOMIC DNA]</scope>
</reference>
<reference key="2">
    <citation type="journal article" date="2001" name="Nature">
        <title>Massive gene decay in the leprosy bacillus.</title>
        <authorList>
            <person name="Cole S.T."/>
            <person name="Eiglmeier K."/>
            <person name="Parkhill J."/>
            <person name="James K.D."/>
            <person name="Thomson N.R."/>
            <person name="Wheeler P.R."/>
            <person name="Honore N."/>
            <person name="Garnier T."/>
            <person name="Churcher C.M."/>
            <person name="Harris D.E."/>
            <person name="Mungall K.L."/>
            <person name="Basham D."/>
            <person name="Brown D."/>
            <person name="Chillingworth T."/>
            <person name="Connor R."/>
            <person name="Davies R.M."/>
            <person name="Devlin K."/>
            <person name="Duthoy S."/>
            <person name="Feltwell T."/>
            <person name="Fraser A."/>
            <person name="Hamlin N."/>
            <person name="Holroyd S."/>
            <person name="Hornsby T."/>
            <person name="Jagels K."/>
            <person name="Lacroix C."/>
            <person name="Maclean J."/>
            <person name="Moule S."/>
            <person name="Murphy L.D."/>
            <person name="Oliver K."/>
            <person name="Quail M.A."/>
            <person name="Rajandream M.A."/>
            <person name="Rutherford K.M."/>
            <person name="Rutter S."/>
            <person name="Seeger K."/>
            <person name="Simon S."/>
            <person name="Simmonds M."/>
            <person name="Skelton J."/>
            <person name="Squares R."/>
            <person name="Squares S."/>
            <person name="Stevens K."/>
            <person name="Taylor K."/>
            <person name="Whitehead S."/>
            <person name="Woodward J.R."/>
            <person name="Barrell B.G."/>
        </authorList>
    </citation>
    <scope>NUCLEOTIDE SEQUENCE [LARGE SCALE GENOMIC DNA]</scope>
    <source>
        <strain>TN</strain>
    </source>
</reference>
<comment type="subcellular location">
    <subcellularLocation>
        <location evidence="2">Cell membrane</location>
        <topology evidence="2">Lipid-anchor</topology>
    </subcellularLocation>
    <subcellularLocation>
        <location evidence="2">Cell membrane</location>
        <topology evidence="3">Single-pass membrane protein</topology>
    </subcellularLocation>
</comment>
<comment type="similarity">
    <text evidence="3">To M.tuberculosis Rv1343c.</text>
</comment>
<gene>
    <name type="primary">lprD</name>
    <name type="ordered locus">ML1177</name>
    <name type="ORF">B1549_F3_106</name>
    <name type="ORF">MLCB1701.03c</name>
</gene>
<dbReference type="EMBL" id="U00014">
    <property type="protein sequence ID" value="AAA50903.1"/>
    <property type="molecule type" value="Genomic_DNA"/>
</dbReference>
<dbReference type="EMBL" id="AL049191">
    <property type="protein sequence ID" value="CAB39143.1"/>
    <property type="molecule type" value="Genomic_DNA"/>
</dbReference>
<dbReference type="EMBL" id="AL583921">
    <property type="protein sequence ID" value="CAC31558.1"/>
    <property type="molecule type" value="Genomic_DNA"/>
</dbReference>
<dbReference type="PIR" id="S72785">
    <property type="entry name" value="S72785"/>
</dbReference>
<dbReference type="RefSeq" id="NP_301859.1">
    <property type="nucleotide sequence ID" value="NC_002677.1"/>
</dbReference>
<dbReference type="RefSeq" id="WP_010908183.1">
    <property type="nucleotide sequence ID" value="NC_002677.1"/>
</dbReference>
<dbReference type="STRING" id="272631.gene:17575007"/>
<dbReference type="KEGG" id="mle:ML1177"/>
<dbReference type="PATRIC" id="fig|272631.5.peg.2134"/>
<dbReference type="Leproma" id="ML1177"/>
<dbReference type="eggNOG" id="COG1566">
    <property type="taxonomic scope" value="Bacteria"/>
</dbReference>
<dbReference type="HOGENOM" id="CLU_122754_0_0_11"/>
<dbReference type="OrthoDB" id="5187941at2"/>
<dbReference type="Proteomes" id="UP000000806">
    <property type="component" value="Chromosome"/>
</dbReference>
<dbReference type="GO" id="GO:0005886">
    <property type="term" value="C:plasma membrane"/>
    <property type="evidence" value="ECO:0007669"/>
    <property type="project" value="UniProtKB-SubCell"/>
</dbReference>
<dbReference type="PROSITE" id="PS51257">
    <property type="entry name" value="PROKAR_LIPOPROTEIN"/>
    <property type="match status" value="1"/>
</dbReference>
<accession>P54134</accession>
<evidence type="ECO:0000255" key="1"/>
<evidence type="ECO:0000255" key="2">
    <source>
        <dbReference type="PROSITE-ProRule" id="PRU00303"/>
    </source>
</evidence>
<evidence type="ECO:0000305" key="3"/>
<sequence>MSTTRRRRPALVALVTIAACGCLALGWWQWTRFQSASGTFQNLGYALQWPLFAGFCLYTYHNFVRYEESPPQPRHMNCIAEIPPELLPARPKPEQQPPDDPALRKYNTYLAELAKQDAENHNRTTT</sequence>
<organism>
    <name type="scientific">Mycobacterium leprae (strain TN)</name>
    <dbReference type="NCBI Taxonomy" id="272631"/>
    <lineage>
        <taxon>Bacteria</taxon>
        <taxon>Bacillati</taxon>
        <taxon>Actinomycetota</taxon>
        <taxon>Actinomycetes</taxon>
        <taxon>Mycobacteriales</taxon>
        <taxon>Mycobacteriaceae</taxon>
        <taxon>Mycobacterium</taxon>
    </lineage>
</organism>
<feature type="signal peptide" evidence="2">
    <location>
        <begin position="1"/>
        <end position="19"/>
    </location>
</feature>
<feature type="chain" id="PRO_0000103818" description="Putative lipoprotein LprD">
    <location>
        <begin position="20"/>
        <end position="126"/>
    </location>
</feature>
<feature type="transmembrane region" description="Helical" evidence="1">
    <location>
        <begin position="44"/>
        <end position="64"/>
    </location>
</feature>
<feature type="lipid moiety-binding region" description="N-palmitoyl cysteine" evidence="2">
    <location>
        <position position="20"/>
    </location>
</feature>
<feature type="lipid moiety-binding region" description="S-diacylglycerol cysteine" evidence="2">
    <location>
        <position position="20"/>
    </location>
</feature>
<name>LPRD_MYCLE</name>